<reference key="1">
    <citation type="journal article" date="2008" name="BMC Microbiol.">
        <title>Complete genome sequence of Treponema pallidum ssp. pallidum strain SS14 determined with oligonucleotide arrays.</title>
        <authorList>
            <person name="Matejkova P."/>
            <person name="Strouhal M."/>
            <person name="Smajs D."/>
            <person name="Norris S.J."/>
            <person name="Palzkill T."/>
            <person name="Petrosino J.F."/>
            <person name="Sodergren E."/>
            <person name="Norton J.E."/>
            <person name="Singh J."/>
            <person name="Richmond T.A."/>
            <person name="Molla M.N."/>
            <person name="Albert T.J."/>
            <person name="Weinstock G.M."/>
        </authorList>
    </citation>
    <scope>NUCLEOTIDE SEQUENCE [LARGE SCALE GENOMIC DNA]</scope>
    <source>
        <strain>SS14</strain>
    </source>
</reference>
<feature type="chain" id="PRO_1000088941" description="Ribosome-binding factor A">
    <location>
        <begin position="1"/>
        <end position="126"/>
    </location>
</feature>
<accession>B2S4C7</accession>
<dbReference type="EMBL" id="CP000805">
    <property type="protein sequence ID" value="ACD71306.1"/>
    <property type="molecule type" value="Genomic_DNA"/>
</dbReference>
<dbReference type="RefSeq" id="WP_010882333.1">
    <property type="nucleotide sequence ID" value="NC_021508.1"/>
</dbReference>
<dbReference type="SMR" id="B2S4C7"/>
<dbReference type="GeneID" id="93876644"/>
<dbReference type="KEGG" id="tpp:TPASS_0890"/>
<dbReference type="PATRIC" id="fig|455434.6.peg.877"/>
<dbReference type="Proteomes" id="UP000001202">
    <property type="component" value="Chromosome"/>
</dbReference>
<dbReference type="GO" id="GO:0005829">
    <property type="term" value="C:cytosol"/>
    <property type="evidence" value="ECO:0007669"/>
    <property type="project" value="TreeGrafter"/>
</dbReference>
<dbReference type="GO" id="GO:0043024">
    <property type="term" value="F:ribosomal small subunit binding"/>
    <property type="evidence" value="ECO:0007669"/>
    <property type="project" value="TreeGrafter"/>
</dbReference>
<dbReference type="GO" id="GO:0030490">
    <property type="term" value="P:maturation of SSU-rRNA"/>
    <property type="evidence" value="ECO:0007669"/>
    <property type="project" value="UniProtKB-UniRule"/>
</dbReference>
<dbReference type="Gene3D" id="3.30.300.20">
    <property type="match status" value="1"/>
</dbReference>
<dbReference type="HAMAP" id="MF_00003">
    <property type="entry name" value="RbfA"/>
    <property type="match status" value="1"/>
</dbReference>
<dbReference type="InterPro" id="IPR015946">
    <property type="entry name" value="KH_dom-like_a/b"/>
</dbReference>
<dbReference type="InterPro" id="IPR000238">
    <property type="entry name" value="RbfA"/>
</dbReference>
<dbReference type="InterPro" id="IPR023799">
    <property type="entry name" value="RbfA_dom_sf"/>
</dbReference>
<dbReference type="InterPro" id="IPR020053">
    <property type="entry name" value="Ribosome-bd_factorA_CS"/>
</dbReference>
<dbReference type="NCBIfam" id="TIGR00082">
    <property type="entry name" value="rbfA"/>
    <property type="match status" value="1"/>
</dbReference>
<dbReference type="PANTHER" id="PTHR33515">
    <property type="entry name" value="RIBOSOME-BINDING FACTOR A, CHLOROPLASTIC-RELATED"/>
    <property type="match status" value="1"/>
</dbReference>
<dbReference type="PANTHER" id="PTHR33515:SF1">
    <property type="entry name" value="RIBOSOME-BINDING FACTOR A, CHLOROPLASTIC-RELATED"/>
    <property type="match status" value="1"/>
</dbReference>
<dbReference type="Pfam" id="PF02033">
    <property type="entry name" value="RBFA"/>
    <property type="match status" value="1"/>
</dbReference>
<dbReference type="SUPFAM" id="SSF89919">
    <property type="entry name" value="Ribosome-binding factor A, RbfA"/>
    <property type="match status" value="1"/>
</dbReference>
<dbReference type="PROSITE" id="PS01319">
    <property type="entry name" value="RBFA"/>
    <property type="match status" value="1"/>
</dbReference>
<sequence length="126" mass="14128">MKQVSQLRVRKLGEHIRAEIAQLIMLGKIKDPRVSPFLSVNWVDVSGGMVCARVYVSSFMGKYKTKQGVQGLESAAGFIRSVLAKKLRLRQCPRLSFVYDESVRDGFSLSRKIDRLESGGVQTEHA</sequence>
<gene>
    <name evidence="1" type="primary">rbfA</name>
    <name type="ordered locus">TPASS_0890</name>
</gene>
<keyword id="KW-0963">Cytoplasm</keyword>
<keyword id="KW-0690">Ribosome biogenesis</keyword>
<comment type="function">
    <text evidence="1">One of several proteins that assist in the late maturation steps of the functional core of the 30S ribosomal subunit. Associates with free 30S ribosomal subunits (but not with 30S subunits that are part of 70S ribosomes or polysomes). Required for efficient processing of 16S rRNA. May interact with the 5'-terminal helix region of 16S rRNA.</text>
</comment>
<comment type="subunit">
    <text evidence="1">Monomer. Binds 30S ribosomal subunits, but not 50S ribosomal subunits or 70S ribosomes.</text>
</comment>
<comment type="subcellular location">
    <subcellularLocation>
        <location evidence="1">Cytoplasm</location>
    </subcellularLocation>
</comment>
<comment type="similarity">
    <text evidence="1">Belongs to the RbfA family.</text>
</comment>
<evidence type="ECO:0000255" key="1">
    <source>
        <dbReference type="HAMAP-Rule" id="MF_00003"/>
    </source>
</evidence>
<proteinExistence type="inferred from homology"/>
<protein>
    <recommendedName>
        <fullName evidence="1">Ribosome-binding factor A</fullName>
    </recommendedName>
</protein>
<name>RBFA_TREPS</name>
<organism>
    <name type="scientific">Treponema pallidum subsp. pallidum (strain SS14)</name>
    <dbReference type="NCBI Taxonomy" id="455434"/>
    <lineage>
        <taxon>Bacteria</taxon>
        <taxon>Pseudomonadati</taxon>
        <taxon>Spirochaetota</taxon>
        <taxon>Spirochaetia</taxon>
        <taxon>Spirochaetales</taxon>
        <taxon>Treponemataceae</taxon>
        <taxon>Treponema</taxon>
    </lineage>
</organism>